<reference key="1">
    <citation type="journal article" date="2007" name="PLoS ONE">
        <title>A glimpse of streptococcal toxic shock syndrome from comparative genomics of S. suis 2 Chinese isolates.</title>
        <authorList>
            <person name="Chen C."/>
            <person name="Tang J."/>
            <person name="Dong W."/>
            <person name="Wang C."/>
            <person name="Feng Y."/>
            <person name="Wang J."/>
            <person name="Zheng F."/>
            <person name="Pan X."/>
            <person name="Liu D."/>
            <person name="Li M."/>
            <person name="Song Y."/>
            <person name="Zhu X."/>
            <person name="Sun H."/>
            <person name="Feng T."/>
            <person name="Guo Z."/>
            <person name="Ju A."/>
            <person name="Ge J."/>
            <person name="Dong Y."/>
            <person name="Sun W."/>
            <person name="Jiang Y."/>
            <person name="Wang J."/>
            <person name="Yan J."/>
            <person name="Yang H."/>
            <person name="Wang X."/>
            <person name="Gao G.F."/>
            <person name="Yang R."/>
            <person name="Wang J."/>
            <person name="Yu J."/>
        </authorList>
    </citation>
    <scope>NUCLEOTIDE SEQUENCE [LARGE SCALE GENOMIC DNA]</scope>
    <source>
        <strain>05ZYH33</strain>
    </source>
</reference>
<accession>A4VT84</accession>
<sequence length="479" mass="53184">MNFETIIGLEVHVELNTNSKIFSPSSAHFGEDPNANTNVIDWSFPGVLPVLNKGVVDAGIKAALALNMDIHKDMHFDRKNYFYPDNPKAYQISQFDEPIGYNGWIEIELEDGSTKKIRIERAHLEEDAGKNTHGTDGYSYVDLNRQGVPLIEIVSEADMRSPEEAYAYLTALKEIIQYTGISDVKMEEGSMRVDANISLRPYGQEKFGTKTELKNLNSFNYVRKGLQHEVERQAKILRSGGQIQQETRRYDESTGETILMRVKEGSADYRYFPEPDLPLYEIDDSWIEEVRAELPVFPKARRAHYVENLGLTAYDAGQLTSTKALSDFFEAAVAAGGDAKQVSNWLQGEVAQFLNAEGKTIEQIALTPENLVEMIALIADGTISSKIAKKVFVHLAKEGGSAKAYVEKAGLVQISDPAVLIPIIHQVFADNEAAVADFKSGKRNADKAFTGFLMKATKGQANPQVAQQLLAQELAKLLD</sequence>
<gene>
    <name evidence="1" type="primary">gatB</name>
    <name type="ordered locus">SSU05_0356</name>
</gene>
<keyword id="KW-0067">ATP-binding</keyword>
<keyword id="KW-0436">Ligase</keyword>
<keyword id="KW-0547">Nucleotide-binding</keyword>
<keyword id="KW-0648">Protein biosynthesis</keyword>
<comment type="function">
    <text evidence="1">Allows the formation of correctly charged Asn-tRNA(Asn) or Gln-tRNA(Gln) through the transamidation of misacylated Asp-tRNA(Asn) or Glu-tRNA(Gln) in organisms which lack either or both of asparaginyl-tRNA or glutaminyl-tRNA synthetases. The reaction takes place in the presence of glutamine and ATP through an activated phospho-Asp-tRNA(Asn) or phospho-Glu-tRNA(Gln).</text>
</comment>
<comment type="catalytic activity">
    <reaction evidence="1">
        <text>L-glutamyl-tRNA(Gln) + L-glutamine + ATP + H2O = L-glutaminyl-tRNA(Gln) + L-glutamate + ADP + phosphate + H(+)</text>
        <dbReference type="Rhea" id="RHEA:17521"/>
        <dbReference type="Rhea" id="RHEA-COMP:9681"/>
        <dbReference type="Rhea" id="RHEA-COMP:9684"/>
        <dbReference type="ChEBI" id="CHEBI:15377"/>
        <dbReference type="ChEBI" id="CHEBI:15378"/>
        <dbReference type="ChEBI" id="CHEBI:29985"/>
        <dbReference type="ChEBI" id="CHEBI:30616"/>
        <dbReference type="ChEBI" id="CHEBI:43474"/>
        <dbReference type="ChEBI" id="CHEBI:58359"/>
        <dbReference type="ChEBI" id="CHEBI:78520"/>
        <dbReference type="ChEBI" id="CHEBI:78521"/>
        <dbReference type="ChEBI" id="CHEBI:456216"/>
    </reaction>
</comment>
<comment type="catalytic activity">
    <reaction evidence="1">
        <text>L-aspartyl-tRNA(Asn) + L-glutamine + ATP + H2O = L-asparaginyl-tRNA(Asn) + L-glutamate + ADP + phosphate + 2 H(+)</text>
        <dbReference type="Rhea" id="RHEA:14513"/>
        <dbReference type="Rhea" id="RHEA-COMP:9674"/>
        <dbReference type="Rhea" id="RHEA-COMP:9677"/>
        <dbReference type="ChEBI" id="CHEBI:15377"/>
        <dbReference type="ChEBI" id="CHEBI:15378"/>
        <dbReference type="ChEBI" id="CHEBI:29985"/>
        <dbReference type="ChEBI" id="CHEBI:30616"/>
        <dbReference type="ChEBI" id="CHEBI:43474"/>
        <dbReference type="ChEBI" id="CHEBI:58359"/>
        <dbReference type="ChEBI" id="CHEBI:78515"/>
        <dbReference type="ChEBI" id="CHEBI:78516"/>
        <dbReference type="ChEBI" id="CHEBI:456216"/>
    </reaction>
</comment>
<comment type="subunit">
    <text evidence="1">Heterotrimer of A, B and C subunits.</text>
</comment>
<comment type="similarity">
    <text evidence="1">Belongs to the GatB/GatE family. GatB subfamily.</text>
</comment>
<dbReference type="EC" id="6.3.5.-" evidence="1"/>
<dbReference type="EMBL" id="CP000407">
    <property type="protein sequence ID" value="ABP89323.1"/>
    <property type="molecule type" value="Genomic_DNA"/>
</dbReference>
<dbReference type="SMR" id="A4VT84"/>
<dbReference type="STRING" id="391295.SSU05_0356"/>
<dbReference type="KEGG" id="ssu:SSU05_0356"/>
<dbReference type="eggNOG" id="COG0064">
    <property type="taxonomic scope" value="Bacteria"/>
</dbReference>
<dbReference type="HOGENOM" id="CLU_019240_0_0_9"/>
<dbReference type="GO" id="GO:0050566">
    <property type="term" value="F:asparaginyl-tRNA synthase (glutamine-hydrolyzing) activity"/>
    <property type="evidence" value="ECO:0007669"/>
    <property type="project" value="RHEA"/>
</dbReference>
<dbReference type="GO" id="GO:0005524">
    <property type="term" value="F:ATP binding"/>
    <property type="evidence" value="ECO:0007669"/>
    <property type="project" value="UniProtKB-KW"/>
</dbReference>
<dbReference type="GO" id="GO:0050567">
    <property type="term" value="F:glutaminyl-tRNA synthase (glutamine-hydrolyzing) activity"/>
    <property type="evidence" value="ECO:0007669"/>
    <property type="project" value="UniProtKB-UniRule"/>
</dbReference>
<dbReference type="GO" id="GO:0070681">
    <property type="term" value="P:glutaminyl-tRNAGln biosynthesis via transamidation"/>
    <property type="evidence" value="ECO:0007669"/>
    <property type="project" value="TreeGrafter"/>
</dbReference>
<dbReference type="GO" id="GO:0006412">
    <property type="term" value="P:translation"/>
    <property type="evidence" value="ECO:0007669"/>
    <property type="project" value="UniProtKB-UniRule"/>
</dbReference>
<dbReference type="FunFam" id="1.10.10.410:FF:000001">
    <property type="entry name" value="Aspartyl/glutamyl-tRNA(Asn/Gln) amidotransferase subunit B"/>
    <property type="match status" value="1"/>
</dbReference>
<dbReference type="FunFam" id="1.10.150.380:FF:000001">
    <property type="entry name" value="Aspartyl/glutamyl-tRNA(Asn/Gln) amidotransferase subunit B"/>
    <property type="match status" value="1"/>
</dbReference>
<dbReference type="Gene3D" id="1.10.10.410">
    <property type="match status" value="1"/>
</dbReference>
<dbReference type="Gene3D" id="1.10.150.380">
    <property type="entry name" value="GatB domain, N-terminal subdomain"/>
    <property type="match status" value="1"/>
</dbReference>
<dbReference type="HAMAP" id="MF_00121">
    <property type="entry name" value="GatB"/>
    <property type="match status" value="1"/>
</dbReference>
<dbReference type="InterPro" id="IPR017959">
    <property type="entry name" value="Asn/Gln-tRNA_amidoTrfase_suB/E"/>
</dbReference>
<dbReference type="InterPro" id="IPR006075">
    <property type="entry name" value="Asn/Gln-tRNA_Trfase_suB/E_cat"/>
</dbReference>
<dbReference type="InterPro" id="IPR018027">
    <property type="entry name" value="Asn/Gln_amidotransferase"/>
</dbReference>
<dbReference type="InterPro" id="IPR003789">
    <property type="entry name" value="Asn/Gln_tRNA_amidoTrase-B-like"/>
</dbReference>
<dbReference type="InterPro" id="IPR004413">
    <property type="entry name" value="GatB"/>
</dbReference>
<dbReference type="InterPro" id="IPR042114">
    <property type="entry name" value="GatB_C_1"/>
</dbReference>
<dbReference type="InterPro" id="IPR023168">
    <property type="entry name" value="GatB_Yqey_C_2"/>
</dbReference>
<dbReference type="InterPro" id="IPR017958">
    <property type="entry name" value="Gln-tRNA_amidoTrfase_suB_CS"/>
</dbReference>
<dbReference type="InterPro" id="IPR014746">
    <property type="entry name" value="Gln_synth/guanido_kin_cat_dom"/>
</dbReference>
<dbReference type="NCBIfam" id="TIGR00133">
    <property type="entry name" value="gatB"/>
    <property type="match status" value="1"/>
</dbReference>
<dbReference type="NCBIfam" id="NF004011">
    <property type="entry name" value="PRK05477.1-1"/>
    <property type="match status" value="1"/>
</dbReference>
<dbReference type="NCBIfam" id="NF004012">
    <property type="entry name" value="PRK05477.1-2"/>
    <property type="match status" value="1"/>
</dbReference>
<dbReference type="NCBIfam" id="NF004014">
    <property type="entry name" value="PRK05477.1-4"/>
    <property type="match status" value="1"/>
</dbReference>
<dbReference type="PANTHER" id="PTHR11659">
    <property type="entry name" value="GLUTAMYL-TRNA GLN AMIDOTRANSFERASE SUBUNIT B MITOCHONDRIAL AND PROKARYOTIC PET112-RELATED"/>
    <property type="match status" value="1"/>
</dbReference>
<dbReference type="PANTHER" id="PTHR11659:SF0">
    <property type="entry name" value="GLUTAMYL-TRNA(GLN) AMIDOTRANSFERASE SUBUNIT B, MITOCHONDRIAL"/>
    <property type="match status" value="1"/>
</dbReference>
<dbReference type="Pfam" id="PF02934">
    <property type="entry name" value="GatB_N"/>
    <property type="match status" value="1"/>
</dbReference>
<dbReference type="Pfam" id="PF02637">
    <property type="entry name" value="GatB_Yqey"/>
    <property type="match status" value="1"/>
</dbReference>
<dbReference type="SMART" id="SM00845">
    <property type="entry name" value="GatB_Yqey"/>
    <property type="match status" value="1"/>
</dbReference>
<dbReference type="SUPFAM" id="SSF89095">
    <property type="entry name" value="GatB/YqeY motif"/>
    <property type="match status" value="1"/>
</dbReference>
<dbReference type="SUPFAM" id="SSF55931">
    <property type="entry name" value="Glutamine synthetase/guanido kinase"/>
    <property type="match status" value="1"/>
</dbReference>
<dbReference type="PROSITE" id="PS01234">
    <property type="entry name" value="GATB"/>
    <property type="match status" value="1"/>
</dbReference>
<protein>
    <recommendedName>
        <fullName evidence="1">Aspartyl/glutamyl-tRNA(Asn/Gln) amidotransferase subunit B</fullName>
        <shortName evidence="1">Asp/Glu-ADT subunit B</shortName>
        <ecNumber evidence="1">6.3.5.-</ecNumber>
    </recommendedName>
</protein>
<evidence type="ECO:0000255" key="1">
    <source>
        <dbReference type="HAMAP-Rule" id="MF_00121"/>
    </source>
</evidence>
<proteinExistence type="inferred from homology"/>
<feature type="chain" id="PRO_1000016051" description="Aspartyl/glutamyl-tRNA(Asn/Gln) amidotransferase subunit B">
    <location>
        <begin position="1"/>
        <end position="479"/>
    </location>
</feature>
<name>GATB_STRSY</name>
<organism>
    <name type="scientific">Streptococcus suis (strain 05ZYH33)</name>
    <dbReference type="NCBI Taxonomy" id="391295"/>
    <lineage>
        <taxon>Bacteria</taxon>
        <taxon>Bacillati</taxon>
        <taxon>Bacillota</taxon>
        <taxon>Bacilli</taxon>
        <taxon>Lactobacillales</taxon>
        <taxon>Streptococcaceae</taxon>
        <taxon>Streptococcus</taxon>
    </lineage>
</organism>